<evidence type="ECO:0000255" key="1">
    <source>
        <dbReference type="HAMAP-Rule" id="MF_00268"/>
    </source>
</evidence>
<proteinExistence type="inferred from homology"/>
<accession>B3R0F8</accession>
<sequence>MENNKKENNKKENNLKILEETIKEVEKQFGKGSIFKLNSNNNQSIETISTGSMSLDIALGIGGYPKGRIIEIFGPESSGKTTLTLHAIAEAQKLGGNVAFIDAEHALDPKYAQAIGVNIDELVLSQPDSGEKALDIATSLIKSGSISLLVIDSVAALTPESELMGEMKDINVGLQARMMGKAMRIQSGIISKTNTVVIYINQLREKVGNFYGNPEVTTGGKALKFFCSLRLDIRRTAEKIKNNNDEIIGVKSNIKIVKSKVSTPFKTATVDIIYGKGISKIGEILDLAIDLNLIKRNGAWYNYKNENFAQGKENAKIFLQNNLEIYNFLEEQIRKKYKI</sequence>
<comment type="function">
    <text evidence="1">Can catalyze the hydrolysis of ATP in the presence of single-stranded DNA, the ATP-dependent uptake of single-stranded DNA by duplex DNA, and the ATP-dependent hybridization of homologous single-stranded DNAs. It interacts with LexA causing its activation and leading to its autocatalytic cleavage.</text>
</comment>
<comment type="subcellular location">
    <subcellularLocation>
        <location evidence="1">Cytoplasm</location>
    </subcellularLocation>
</comment>
<comment type="similarity">
    <text evidence="1">Belongs to the RecA family.</text>
</comment>
<organism>
    <name type="scientific">Phytoplasma mali (strain AT)</name>
    <dbReference type="NCBI Taxonomy" id="482235"/>
    <lineage>
        <taxon>Bacteria</taxon>
        <taxon>Bacillati</taxon>
        <taxon>Mycoplasmatota</taxon>
        <taxon>Mollicutes</taxon>
        <taxon>Acholeplasmatales</taxon>
        <taxon>Acholeplasmataceae</taxon>
        <taxon>Candidatus Phytoplasma</taxon>
        <taxon>16SrX (Apple proliferation group)</taxon>
    </lineage>
</organism>
<gene>
    <name evidence="1" type="primary">recA</name>
    <name type="ordered locus">ATP_00135</name>
</gene>
<feature type="chain" id="PRO_1000193320" description="Protein RecA">
    <location>
        <begin position="1"/>
        <end position="339"/>
    </location>
</feature>
<feature type="binding site" evidence="1">
    <location>
        <begin position="74"/>
        <end position="81"/>
    </location>
    <ligand>
        <name>ATP</name>
        <dbReference type="ChEBI" id="CHEBI:30616"/>
    </ligand>
</feature>
<protein>
    <recommendedName>
        <fullName evidence="1">Protein RecA</fullName>
    </recommendedName>
    <alternativeName>
        <fullName evidence="1">Recombinase A</fullName>
    </alternativeName>
</protein>
<name>RECA_PHYMT</name>
<reference key="1">
    <citation type="journal article" date="2008" name="BMC Genomics">
        <title>The linear chromosome of the plant-pathogenic mycoplasma 'Candidatus Phytoplasma mali'.</title>
        <authorList>
            <person name="Kube M."/>
            <person name="Schneider B."/>
            <person name="Kuhl H."/>
            <person name="Dandekar T."/>
            <person name="Heitmann K."/>
            <person name="Migdoll A.M."/>
            <person name="Reinhardt R."/>
            <person name="Seemueller E."/>
        </authorList>
    </citation>
    <scope>NUCLEOTIDE SEQUENCE [LARGE SCALE GENOMIC DNA]</scope>
    <source>
        <strain>AT</strain>
    </source>
</reference>
<dbReference type="EMBL" id="CU469464">
    <property type="protein sequence ID" value="CAP18322.1"/>
    <property type="molecule type" value="Genomic_DNA"/>
</dbReference>
<dbReference type="SMR" id="B3R0F8"/>
<dbReference type="STRING" id="37692.ATP_00135"/>
<dbReference type="KEGG" id="pml:ATP_00135"/>
<dbReference type="eggNOG" id="COG0468">
    <property type="taxonomic scope" value="Bacteria"/>
</dbReference>
<dbReference type="HOGENOM" id="CLU_040469_1_2_14"/>
<dbReference type="Proteomes" id="UP000002020">
    <property type="component" value="Chromosome"/>
</dbReference>
<dbReference type="GO" id="GO:0005829">
    <property type="term" value="C:cytosol"/>
    <property type="evidence" value="ECO:0007669"/>
    <property type="project" value="TreeGrafter"/>
</dbReference>
<dbReference type="GO" id="GO:0005524">
    <property type="term" value="F:ATP binding"/>
    <property type="evidence" value="ECO:0007669"/>
    <property type="project" value="UniProtKB-UniRule"/>
</dbReference>
<dbReference type="GO" id="GO:0016887">
    <property type="term" value="F:ATP hydrolysis activity"/>
    <property type="evidence" value="ECO:0007669"/>
    <property type="project" value="InterPro"/>
</dbReference>
<dbReference type="GO" id="GO:0140664">
    <property type="term" value="F:ATP-dependent DNA damage sensor activity"/>
    <property type="evidence" value="ECO:0007669"/>
    <property type="project" value="InterPro"/>
</dbReference>
<dbReference type="GO" id="GO:0003684">
    <property type="term" value="F:damaged DNA binding"/>
    <property type="evidence" value="ECO:0007669"/>
    <property type="project" value="UniProtKB-UniRule"/>
</dbReference>
<dbReference type="GO" id="GO:0003697">
    <property type="term" value="F:single-stranded DNA binding"/>
    <property type="evidence" value="ECO:0007669"/>
    <property type="project" value="UniProtKB-UniRule"/>
</dbReference>
<dbReference type="GO" id="GO:0006310">
    <property type="term" value="P:DNA recombination"/>
    <property type="evidence" value="ECO:0007669"/>
    <property type="project" value="UniProtKB-UniRule"/>
</dbReference>
<dbReference type="GO" id="GO:0006281">
    <property type="term" value="P:DNA repair"/>
    <property type="evidence" value="ECO:0007669"/>
    <property type="project" value="UniProtKB-UniRule"/>
</dbReference>
<dbReference type="GO" id="GO:0009432">
    <property type="term" value="P:SOS response"/>
    <property type="evidence" value="ECO:0007669"/>
    <property type="project" value="UniProtKB-UniRule"/>
</dbReference>
<dbReference type="CDD" id="cd00983">
    <property type="entry name" value="RecA"/>
    <property type="match status" value="1"/>
</dbReference>
<dbReference type="FunFam" id="3.40.50.300:FF:000087">
    <property type="entry name" value="Recombinase RecA"/>
    <property type="match status" value="1"/>
</dbReference>
<dbReference type="Gene3D" id="3.40.50.300">
    <property type="entry name" value="P-loop containing nucleotide triphosphate hydrolases"/>
    <property type="match status" value="1"/>
</dbReference>
<dbReference type="HAMAP" id="MF_00268">
    <property type="entry name" value="RecA"/>
    <property type="match status" value="1"/>
</dbReference>
<dbReference type="InterPro" id="IPR003593">
    <property type="entry name" value="AAA+_ATPase"/>
</dbReference>
<dbReference type="InterPro" id="IPR013765">
    <property type="entry name" value="DNA_recomb/repair_RecA"/>
</dbReference>
<dbReference type="InterPro" id="IPR027417">
    <property type="entry name" value="P-loop_NTPase"/>
</dbReference>
<dbReference type="InterPro" id="IPR049261">
    <property type="entry name" value="RecA-like_C"/>
</dbReference>
<dbReference type="InterPro" id="IPR049428">
    <property type="entry name" value="RecA-like_N"/>
</dbReference>
<dbReference type="InterPro" id="IPR020588">
    <property type="entry name" value="RecA_ATP-bd"/>
</dbReference>
<dbReference type="InterPro" id="IPR023400">
    <property type="entry name" value="RecA_C_sf"/>
</dbReference>
<dbReference type="InterPro" id="IPR020587">
    <property type="entry name" value="RecA_monomer-monomer_interface"/>
</dbReference>
<dbReference type="NCBIfam" id="TIGR02012">
    <property type="entry name" value="tigrfam_recA"/>
    <property type="match status" value="1"/>
</dbReference>
<dbReference type="PANTHER" id="PTHR45900:SF1">
    <property type="entry name" value="MITOCHONDRIAL DNA REPAIR PROTEIN RECA HOMOLOG-RELATED"/>
    <property type="match status" value="1"/>
</dbReference>
<dbReference type="PANTHER" id="PTHR45900">
    <property type="entry name" value="RECA"/>
    <property type="match status" value="1"/>
</dbReference>
<dbReference type="Pfam" id="PF00154">
    <property type="entry name" value="RecA"/>
    <property type="match status" value="1"/>
</dbReference>
<dbReference type="Pfam" id="PF21096">
    <property type="entry name" value="RecA_C"/>
    <property type="match status" value="1"/>
</dbReference>
<dbReference type="PRINTS" id="PR00142">
    <property type="entry name" value="RECA"/>
</dbReference>
<dbReference type="SMART" id="SM00382">
    <property type="entry name" value="AAA"/>
    <property type="match status" value="1"/>
</dbReference>
<dbReference type="SUPFAM" id="SSF52540">
    <property type="entry name" value="P-loop containing nucleoside triphosphate hydrolases"/>
    <property type="match status" value="1"/>
</dbReference>
<dbReference type="SUPFAM" id="SSF54752">
    <property type="entry name" value="RecA protein, C-terminal domain"/>
    <property type="match status" value="1"/>
</dbReference>
<dbReference type="PROSITE" id="PS50162">
    <property type="entry name" value="RECA_2"/>
    <property type="match status" value="1"/>
</dbReference>
<dbReference type="PROSITE" id="PS50163">
    <property type="entry name" value="RECA_3"/>
    <property type="match status" value="1"/>
</dbReference>
<keyword id="KW-0067">ATP-binding</keyword>
<keyword id="KW-0963">Cytoplasm</keyword>
<keyword id="KW-0227">DNA damage</keyword>
<keyword id="KW-0233">DNA recombination</keyword>
<keyword id="KW-0234">DNA repair</keyword>
<keyword id="KW-0238">DNA-binding</keyword>
<keyword id="KW-0547">Nucleotide-binding</keyword>
<keyword id="KW-1185">Reference proteome</keyword>
<keyword id="KW-0742">SOS response</keyword>